<protein>
    <recommendedName>
        <fullName evidence="1">Phosphomethylpyrimidine synthase</fullName>
        <ecNumber evidence="1">4.1.99.17</ecNumber>
    </recommendedName>
    <alternativeName>
        <fullName evidence="1">Hydroxymethylpyrimidine phosphate synthase</fullName>
        <shortName evidence="1">HMP-P synthase</shortName>
        <shortName evidence="1">HMP-phosphate synthase</shortName>
        <shortName evidence="1">HMPP synthase</shortName>
    </alternativeName>
    <alternativeName>
        <fullName evidence="1">Thiamine biosynthesis protein ThiC</fullName>
    </alternativeName>
</protein>
<organism>
    <name type="scientific">Trichodesmium erythraeum (strain IMS101)</name>
    <dbReference type="NCBI Taxonomy" id="203124"/>
    <lineage>
        <taxon>Bacteria</taxon>
        <taxon>Bacillati</taxon>
        <taxon>Cyanobacteriota</taxon>
        <taxon>Cyanophyceae</taxon>
        <taxon>Oscillatoriophycideae</taxon>
        <taxon>Oscillatoriales</taxon>
        <taxon>Microcoleaceae</taxon>
        <taxon>Trichodesmium</taxon>
    </lineage>
</organism>
<evidence type="ECO:0000255" key="1">
    <source>
        <dbReference type="HAMAP-Rule" id="MF_00089"/>
    </source>
</evidence>
<dbReference type="EC" id="4.1.99.17" evidence="1"/>
<dbReference type="EMBL" id="CP000393">
    <property type="protein sequence ID" value="ABG51675.1"/>
    <property type="molecule type" value="Genomic_DNA"/>
</dbReference>
<dbReference type="RefSeq" id="WP_011612039.1">
    <property type="nucleotide sequence ID" value="NC_008312.1"/>
</dbReference>
<dbReference type="SMR" id="Q111Z9"/>
<dbReference type="STRING" id="203124.Tery_2464"/>
<dbReference type="KEGG" id="ter:Tery_2464"/>
<dbReference type="eggNOG" id="COG0422">
    <property type="taxonomic scope" value="Bacteria"/>
</dbReference>
<dbReference type="HOGENOM" id="CLU_013181_2_1_3"/>
<dbReference type="OrthoDB" id="9805897at2"/>
<dbReference type="UniPathway" id="UPA00060"/>
<dbReference type="GO" id="GO:0005829">
    <property type="term" value="C:cytosol"/>
    <property type="evidence" value="ECO:0007669"/>
    <property type="project" value="TreeGrafter"/>
</dbReference>
<dbReference type="GO" id="GO:0051539">
    <property type="term" value="F:4 iron, 4 sulfur cluster binding"/>
    <property type="evidence" value="ECO:0007669"/>
    <property type="project" value="UniProtKB-KW"/>
</dbReference>
<dbReference type="GO" id="GO:0016830">
    <property type="term" value="F:carbon-carbon lyase activity"/>
    <property type="evidence" value="ECO:0007669"/>
    <property type="project" value="InterPro"/>
</dbReference>
<dbReference type="GO" id="GO:0008270">
    <property type="term" value="F:zinc ion binding"/>
    <property type="evidence" value="ECO:0007669"/>
    <property type="project" value="UniProtKB-UniRule"/>
</dbReference>
<dbReference type="GO" id="GO:0009228">
    <property type="term" value="P:thiamine biosynthetic process"/>
    <property type="evidence" value="ECO:0007669"/>
    <property type="project" value="UniProtKB-KW"/>
</dbReference>
<dbReference type="GO" id="GO:0009229">
    <property type="term" value="P:thiamine diphosphate biosynthetic process"/>
    <property type="evidence" value="ECO:0007669"/>
    <property type="project" value="UniProtKB-UniRule"/>
</dbReference>
<dbReference type="Gene3D" id="6.10.250.620">
    <property type="match status" value="1"/>
</dbReference>
<dbReference type="Gene3D" id="3.20.20.540">
    <property type="entry name" value="Radical SAM ThiC family, central domain"/>
    <property type="match status" value="1"/>
</dbReference>
<dbReference type="HAMAP" id="MF_00089">
    <property type="entry name" value="ThiC"/>
    <property type="match status" value="1"/>
</dbReference>
<dbReference type="InterPro" id="IPR037509">
    <property type="entry name" value="ThiC"/>
</dbReference>
<dbReference type="InterPro" id="IPR038521">
    <property type="entry name" value="ThiC/Bza_core_dom"/>
</dbReference>
<dbReference type="InterPro" id="IPR002817">
    <property type="entry name" value="ThiC/BzaA/B"/>
</dbReference>
<dbReference type="NCBIfam" id="NF009895">
    <property type="entry name" value="PRK13352.1"/>
    <property type="match status" value="1"/>
</dbReference>
<dbReference type="NCBIfam" id="TIGR00190">
    <property type="entry name" value="thiC"/>
    <property type="match status" value="1"/>
</dbReference>
<dbReference type="PANTHER" id="PTHR30557:SF1">
    <property type="entry name" value="PHOSPHOMETHYLPYRIMIDINE SYNTHASE, CHLOROPLASTIC"/>
    <property type="match status" value="1"/>
</dbReference>
<dbReference type="PANTHER" id="PTHR30557">
    <property type="entry name" value="THIAMINE BIOSYNTHESIS PROTEIN THIC"/>
    <property type="match status" value="1"/>
</dbReference>
<dbReference type="Pfam" id="PF01964">
    <property type="entry name" value="ThiC_Rad_SAM"/>
    <property type="match status" value="2"/>
</dbReference>
<dbReference type="SFLD" id="SFLDG01114">
    <property type="entry name" value="phosphomethylpyrimidine_syntha"/>
    <property type="match status" value="1"/>
</dbReference>
<dbReference type="SFLD" id="SFLDS00113">
    <property type="entry name" value="Radical_SAM_Phosphomethylpyrim"/>
    <property type="match status" value="1"/>
</dbReference>
<name>THIC_TRIEI</name>
<sequence>MRTEWIAKRSGHKNVSQMHYGRQGIITEEMNFVAQRENLPAELIRAEVARGRMIIPANINHTNLEPMCIGIASRCKVNANIGASPNTSDITKEVDKLKLSIKYGADTVMDLSTGGGNLDEIRTAIINASPVPIGTVPVYQAVESVHGRIENLTADDFLHVIEKHAQQGVDYQTIHAGILIEHLPLVRSRITGIVSRGGGIIAKWMLHHHKQNPLYTHFDDIIEIFKKYDVSFSLGDSLRPGCTHDASDEAQLAELKTLGQLTRRAWGHEVQVMVEGPGHVPMDQIEFNVKKQMEECSSPPLNALDLDPLASNANEQMEKFNVLGPAPFYVLGPLVTDIAPGYDHITSAIGAAMAGWYGTAMLCYVTPKEHLGLPNAEDVRNGLIAYKIAAHAADIGRHRQGARDRDDELSAARYNFDWNRQFELSLDPERAKEYHDETLPADIYKTAEFCSMCGPKFCPMQTKVDADALTELEKFLAKEKEVVTQS</sequence>
<feature type="chain" id="PRO_1000004813" description="Phosphomethylpyrimidine synthase">
    <location>
        <begin position="1"/>
        <end position="486"/>
    </location>
</feature>
<feature type="binding site" evidence="1">
    <location>
        <position position="80"/>
    </location>
    <ligand>
        <name>substrate</name>
    </ligand>
</feature>
<feature type="binding site" evidence="1">
    <location>
        <position position="109"/>
    </location>
    <ligand>
        <name>substrate</name>
    </ligand>
</feature>
<feature type="binding site" evidence="1">
    <location>
        <position position="139"/>
    </location>
    <ligand>
        <name>substrate</name>
    </ligand>
</feature>
<feature type="binding site" evidence="1">
    <location>
        <position position="175"/>
    </location>
    <ligand>
        <name>substrate</name>
    </ligand>
</feature>
<feature type="binding site" evidence="1">
    <location>
        <begin position="195"/>
        <end position="197"/>
    </location>
    <ligand>
        <name>substrate</name>
    </ligand>
</feature>
<feature type="binding site" evidence="1">
    <location>
        <begin position="236"/>
        <end position="239"/>
    </location>
    <ligand>
        <name>substrate</name>
    </ligand>
</feature>
<feature type="binding site" evidence="1">
    <location>
        <position position="275"/>
    </location>
    <ligand>
        <name>substrate</name>
    </ligand>
</feature>
<feature type="binding site" evidence="1">
    <location>
        <position position="279"/>
    </location>
    <ligand>
        <name>Zn(2+)</name>
        <dbReference type="ChEBI" id="CHEBI:29105"/>
    </ligand>
</feature>
<feature type="binding site" evidence="1">
    <location>
        <position position="329"/>
    </location>
    <ligand>
        <name>substrate</name>
    </ligand>
</feature>
<feature type="binding site" evidence="1">
    <location>
        <position position="370"/>
    </location>
    <ligand>
        <name>Zn(2+)</name>
        <dbReference type="ChEBI" id="CHEBI:29105"/>
    </ligand>
</feature>
<feature type="binding site" evidence="1">
    <location>
        <position position="450"/>
    </location>
    <ligand>
        <name>[4Fe-4S] cluster</name>
        <dbReference type="ChEBI" id="CHEBI:49883"/>
        <note>4Fe-4S-S-AdoMet</note>
    </ligand>
</feature>
<feature type="binding site" evidence="1">
    <location>
        <position position="453"/>
    </location>
    <ligand>
        <name>[4Fe-4S] cluster</name>
        <dbReference type="ChEBI" id="CHEBI:49883"/>
        <note>4Fe-4S-S-AdoMet</note>
    </ligand>
</feature>
<feature type="binding site" evidence="1">
    <location>
        <position position="458"/>
    </location>
    <ligand>
        <name>[4Fe-4S] cluster</name>
        <dbReference type="ChEBI" id="CHEBI:49883"/>
        <note>4Fe-4S-S-AdoMet</note>
    </ligand>
</feature>
<gene>
    <name evidence="1" type="primary">thiC</name>
    <name type="ordered locus">Tery_2464</name>
</gene>
<comment type="function">
    <text evidence="1">Catalyzes the synthesis of the hydroxymethylpyrimidine phosphate (HMP-P) moiety of thiamine from aminoimidazole ribotide (AIR) in a radical S-adenosyl-L-methionine (SAM)-dependent reaction.</text>
</comment>
<comment type="catalytic activity">
    <reaction evidence="1">
        <text>5-amino-1-(5-phospho-beta-D-ribosyl)imidazole + S-adenosyl-L-methionine = 4-amino-2-methyl-5-(phosphooxymethyl)pyrimidine + CO + 5'-deoxyadenosine + formate + L-methionine + 3 H(+)</text>
        <dbReference type="Rhea" id="RHEA:24840"/>
        <dbReference type="ChEBI" id="CHEBI:15378"/>
        <dbReference type="ChEBI" id="CHEBI:15740"/>
        <dbReference type="ChEBI" id="CHEBI:17245"/>
        <dbReference type="ChEBI" id="CHEBI:17319"/>
        <dbReference type="ChEBI" id="CHEBI:57844"/>
        <dbReference type="ChEBI" id="CHEBI:58354"/>
        <dbReference type="ChEBI" id="CHEBI:59789"/>
        <dbReference type="ChEBI" id="CHEBI:137981"/>
        <dbReference type="EC" id="4.1.99.17"/>
    </reaction>
</comment>
<comment type="cofactor">
    <cofactor evidence="1">
        <name>[4Fe-4S] cluster</name>
        <dbReference type="ChEBI" id="CHEBI:49883"/>
    </cofactor>
    <text evidence="1">Binds 1 [4Fe-4S] cluster per subunit. The cluster is coordinated with 3 cysteines and an exchangeable S-adenosyl-L-methionine.</text>
</comment>
<comment type="pathway">
    <text evidence="1">Cofactor biosynthesis; thiamine diphosphate biosynthesis.</text>
</comment>
<comment type="similarity">
    <text evidence="1">Belongs to the ThiC family.</text>
</comment>
<keyword id="KW-0004">4Fe-4S</keyword>
<keyword id="KW-0408">Iron</keyword>
<keyword id="KW-0411">Iron-sulfur</keyword>
<keyword id="KW-0456">Lyase</keyword>
<keyword id="KW-0479">Metal-binding</keyword>
<keyword id="KW-0949">S-adenosyl-L-methionine</keyword>
<keyword id="KW-0784">Thiamine biosynthesis</keyword>
<keyword id="KW-0862">Zinc</keyword>
<accession>Q111Z9</accession>
<reference key="1">
    <citation type="journal article" date="2015" name="Proc. Natl. Acad. Sci. U.S.A.">
        <title>Trichodesmium genome maintains abundant, widespread noncoding DNA in situ, despite oligotrophic lifestyle.</title>
        <authorList>
            <person name="Walworth N."/>
            <person name="Pfreundt U."/>
            <person name="Nelson W.C."/>
            <person name="Mincer T."/>
            <person name="Heidelberg J.F."/>
            <person name="Fu F."/>
            <person name="Waterbury J.B."/>
            <person name="Glavina del Rio T."/>
            <person name="Goodwin L."/>
            <person name="Kyrpides N.C."/>
            <person name="Land M.L."/>
            <person name="Woyke T."/>
            <person name="Hutchins D.A."/>
            <person name="Hess W.R."/>
            <person name="Webb E.A."/>
        </authorList>
    </citation>
    <scope>NUCLEOTIDE SEQUENCE [LARGE SCALE GENOMIC DNA]</scope>
    <source>
        <strain>IMS101</strain>
    </source>
</reference>
<proteinExistence type="inferred from homology"/>